<feature type="transit peptide" description="Mitochondrion" evidence="2">
    <location>
        <begin position="1"/>
        <end position="19"/>
    </location>
</feature>
<feature type="chain" id="PRO_0000405610" description="ATPase expression protein 1, mitochondrial">
    <location>
        <begin position="20"/>
        <end position="518"/>
    </location>
</feature>
<comment type="function">
    <text evidence="1">Required for translation of the mitochondrial OLI1 transcript encoding subunit 9 of mitochondrial ATP synthase.</text>
</comment>
<comment type="subcellular location">
    <subcellularLocation>
        <location evidence="1">Mitochondrion</location>
    </subcellularLocation>
</comment>
<comment type="similarity">
    <text evidence="3">Belongs to the AEP1 family.</text>
</comment>
<sequence>MITTVQEISKWRNLCFIRMQSRKWYPVLKKTPLVADGRKIIKHADKVPHPGEIIHPFYQPTAIEQFTACATEYNPSLLDGKKIAPSLIKHPVSLKTILVDSKLKFDDIRGVNRWLMEFVARRQHQRNIVLTPASKSVRSFHVLHLSSTDIAKLRGLENVLSEIENTNDLQSRVESVNNELQNIFDRDSKQTRLFCEDILAYLIKNYGNSTENLILLINVTEMQLFSRLDQMKAMNIILYHILCKVEANENPPYSPTLVTALENLLAAINNRFFPGRCENSLHPIVIEQLLSYFIKTGNLNESKNFLGHLIKKGILPEATIINRYLEAIDVHFDKSTKIFDIRSKFAFIADLAPIIENYGTIDLFKFLIPMCRHFDELCSLLNIIRKSNNAKQAVDSTLPIFIKKVLTFTKDPMINSGNLSTVFNIVSPIYGQNVPSEFVEKFILSFALQGNYTMMAHMIDTYKIKLSHKYQLQIIRALKNSERNHALKNTGAVGYNKEFKKYFIEKYLNCTEREALRP</sequence>
<organism>
    <name type="scientific">Saccharomyces cerevisiae (strain Lalvin EC1118 / Prise de mousse)</name>
    <name type="common">Baker's yeast</name>
    <dbReference type="NCBI Taxonomy" id="643680"/>
    <lineage>
        <taxon>Eukaryota</taxon>
        <taxon>Fungi</taxon>
        <taxon>Dikarya</taxon>
        <taxon>Ascomycota</taxon>
        <taxon>Saccharomycotina</taxon>
        <taxon>Saccharomycetes</taxon>
        <taxon>Saccharomycetales</taxon>
        <taxon>Saccharomycetaceae</taxon>
        <taxon>Saccharomyces</taxon>
    </lineage>
</organism>
<accession>C8ZER6</accession>
<dbReference type="EMBL" id="FN393082">
    <property type="protein sequence ID" value="CAY81882.1"/>
    <property type="molecule type" value="Genomic_DNA"/>
</dbReference>
<dbReference type="HOGENOM" id="CLU_035453_0_0_1"/>
<dbReference type="OrthoDB" id="36478at4893"/>
<dbReference type="Proteomes" id="UP000000286">
    <property type="component" value="Chromosome XIII, Scaffold EC1118_1M3"/>
</dbReference>
<dbReference type="GO" id="GO:0005739">
    <property type="term" value="C:mitochondrion"/>
    <property type="evidence" value="ECO:0007669"/>
    <property type="project" value="UniProtKB-SubCell"/>
</dbReference>
<dbReference type="GO" id="GO:0045182">
    <property type="term" value="F:translation regulator activity"/>
    <property type="evidence" value="ECO:0007669"/>
    <property type="project" value="InterPro"/>
</dbReference>
<dbReference type="InterPro" id="IPR031467">
    <property type="entry name" value="Aep1"/>
</dbReference>
<dbReference type="Pfam" id="PF17049">
    <property type="entry name" value="AEP1"/>
    <property type="match status" value="1"/>
</dbReference>
<evidence type="ECO:0000250" key="1"/>
<evidence type="ECO:0000255" key="2"/>
<evidence type="ECO:0000305" key="3"/>
<keyword id="KW-0496">Mitochondrion</keyword>
<keyword id="KW-0809">Transit peptide</keyword>
<keyword id="KW-0810">Translation regulation</keyword>
<protein>
    <recommendedName>
        <fullName>ATPase expression protein 1, mitochondrial</fullName>
    </recommendedName>
    <alternativeName>
        <fullName>Nuclear control of ATPase messenger RNA expression protein 1</fullName>
    </alternativeName>
</protein>
<reference key="1">
    <citation type="journal article" date="2009" name="Proc. Natl. Acad. Sci. U.S.A.">
        <title>Eukaryote-to-eukaryote gene transfer events revealed by the genome sequence of the wine yeast Saccharomyces cerevisiae EC1118.</title>
        <authorList>
            <person name="Novo M."/>
            <person name="Bigey F."/>
            <person name="Beyne E."/>
            <person name="Galeote V."/>
            <person name="Gavory F."/>
            <person name="Mallet S."/>
            <person name="Cambon B."/>
            <person name="Legras J.-L."/>
            <person name="Wincker P."/>
            <person name="Casaregola S."/>
            <person name="Dequin S."/>
        </authorList>
    </citation>
    <scope>NUCLEOTIDE SEQUENCE [LARGE SCALE GENOMIC DNA]</scope>
    <source>
        <strain>Lalvin EC1118 / Prise de mousse</strain>
    </source>
</reference>
<name>AEP1_YEAS8</name>
<proteinExistence type="inferred from homology"/>
<gene>
    <name type="primary">AEP1</name>
    <name type="synonym">NCA1</name>
    <name type="ORF">EC1118_1M3_2289g</name>
</gene>